<proteinExistence type="evidence at protein level"/>
<name>GS13_BACSU</name>
<feature type="initiator methionine" description="Removed" evidence="4">
    <location>
        <position position="1"/>
    </location>
</feature>
<feature type="chain" id="PRO_0000083862" description="General stress protein 13">
    <location>
        <begin position="2"/>
        <end position="130"/>
    </location>
</feature>
<feature type="domain" description="S1 motif" evidence="1">
    <location>
        <begin position="8"/>
        <end position="77"/>
    </location>
</feature>
<feature type="region of interest" description="Disordered" evidence="2">
    <location>
        <begin position="76"/>
        <end position="109"/>
    </location>
</feature>
<feature type="compositionally biased region" description="Polar residues" evidence="2">
    <location>
        <begin position="100"/>
        <end position="109"/>
    </location>
</feature>
<feature type="sequence conflict" description="In Ref. 3; AA sequence." evidence="5" ref="3">
    <original>E</original>
    <variation>W</variation>
    <location>
        <position position="30"/>
    </location>
</feature>
<feature type="strand" evidence="6">
    <location>
        <begin position="10"/>
        <end position="19"/>
    </location>
</feature>
<feature type="strand" evidence="6">
    <location>
        <begin position="22"/>
        <end position="28"/>
    </location>
</feature>
<feature type="strand" evidence="6">
    <location>
        <begin position="31"/>
        <end position="36"/>
    </location>
</feature>
<feature type="helix" evidence="6">
    <location>
        <begin position="37"/>
        <end position="39"/>
    </location>
</feature>
<feature type="strand" evidence="6">
    <location>
        <begin position="41"/>
        <end position="43"/>
    </location>
</feature>
<feature type="helix" evidence="6">
    <location>
        <begin position="48"/>
        <end position="50"/>
    </location>
</feature>
<feature type="strand" evidence="6">
    <location>
        <begin position="57"/>
        <end position="66"/>
    </location>
</feature>
<feature type="turn" evidence="6">
    <location>
        <begin position="67"/>
        <end position="70"/>
    </location>
</feature>
<feature type="strand" evidence="6">
    <location>
        <begin position="71"/>
        <end position="76"/>
    </location>
</feature>
<feature type="helix" evidence="6">
    <location>
        <begin position="77"/>
        <end position="81"/>
    </location>
</feature>
<feature type="turn" evidence="6">
    <location>
        <begin position="90"/>
        <end position="93"/>
    </location>
</feature>
<feature type="strand" evidence="6">
    <location>
        <begin position="105"/>
        <end position="109"/>
    </location>
</feature>
<feature type="helix" evidence="6">
    <location>
        <begin position="126"/>
        <end position="128"/>
    </location>
</feature>
<gene>
    <name type="primary">yugI</name>
    <name type="ordered locus">BSU31390</name>
</gene>
<sequence length="130" mass="14283">MAAKFEVGSVYTGKVTGLQAYGAFVALDEETQGLVHISEVTHGFVKDINEHLSVGDEVQVKVLAVDEEKGKISLSIRATQAAPEKKESKPRKPKAAQVSEEASTPQGFNTLKDKLEEWIEMSNRKDLIKK</sequence>
<comment type="subunit">
    <text evidence="3">Found in association with the 30S subunit of the ribosome.</text>
</comment>
<comment type="subcellular location">
    <subcellularLocation>
        <location evidence="5">Cytoplasm</location>
    </subcellularLocation>
</comment>
<comment type="induction">
    <text>By heat shock, salt stress, oxidative stress, glucose limitation and oxygen limitation.</text>
</comment>
<dbReference type="EMBL" id="Z93934">
    <property type="protein sequence ID" value="CAB07921.1"/>
    <property type="molecule type" value="Genomic_DNA"/>
</dbReference>
<dbReference type="EMBL" id="AL009126">
    <property type="protein sequence ID" value="CAB15128.1"/>
    <property type="molecule type" value="Genomic_DNA"/>
</dbReference>
<dbReference type="PIR" id="H70010">
    <property type="entry name" value="H70010"/>
</dbReference>
<dbReference type="RefSeq" id="NP_391017.1">
    <property type="nucleotide sequence ID" value="NC_000964.3"/>
</dbReference>
<dbReference type="RefSeq" id="WP_003228864.1">
    <property type="nucleotide sequence ID" value="NZ_OZ025638.1"/>
</dbReference>
<dbReference type="PDB" id="2K4K">
    <property type="method" value="NMR"/>
    <property type="chains" value="A=1-130"/>
</dbReference>
<dbReference type="PDBsum" id="2K4K"/>
<dbReference type="BMRB" id="P80870"/>
<dbReference type="SMR" id="P80870"/>
<dbReference type="FunCoup" id="P80870">
    <property type="interactions" value="95"/>
</dbReference>
<dbReference type="STRING" id="224308.BSU31390"/>
<dbReference type="jPOST" id="P80870"/>
<dbReference type="PaxDb" id="224308-BSU31390"/>
<dbReference type="EnsemblBacteria" id="CAB15128">
    <property type="protein sequence ID" value="CAB15128"/>
    <property type="gene ID" value="BSU_31390"/>
</dbReference>
<dbReference type="GeneID" id="86872324"/>
<dbReference type="GeneID" id="938849"/>
<dbReference type="KEGG" id="bsu:BSU31390"/>
<dbReference type="PATRIC" id="fig|224308.179.peg.3403"/>
<dbReference type="eggNOG" id="COG1098">
    <property type="taxonomic scope" value="Bacteria"/>
</dbReference>
<dbReference type="InParanoid" id="P80870"/>
<dbReference type="OrthoDB" id="9810507at2"/>
<dbReference type="PhylomeDB" id="P80870"/>
<dbReference type="BioCyc" id="BSUB:BSU31390-MONOMER"/>
<dbReference type="EvolutionaryTrace" id="P80870"/>
<dbReference type="PRO" id="PR:P80870"/>
<dbReference type="Proteomes" id="UP000001570">
    <property type="component" value="Chromosome"/>
</dbReference>
<dbReference type="GO" id="GO:0005737">
    <property type="term" value="C:cytoplasm"/>
    <property type="evidence" value="ECO:0007669"/>
    <property type="project" value="UniProtKB-SubCell"/>
</dbReference>
<dbReference type="GO" id="GO:0003676">
    <property type="term" value="F:nucleic acid binding"/>
    <property type="evidence" value="ECO:0007669"/>
    <property type="project" value="InterPro"/>
</dbReference>
<dbReference type="DisProt" id="DP00809"/>
<dbReference type="FunFam" id="2.40.50.140:FF:000059">
    <property type="entry name" value="S1 RNA binding protein"/>
    <property type="match status" value="1"/>
</dbReference>
<dbReference type="Gene3D" id="2.40.50.140">
    <property type="entry name" value="Nucleic acid-binding proteins"/>
    <property type="match status" value="1"/>
</dbReference>
<dbReference type="InterPro" id="IPR012340">
    <property type="entry name" value="NA-bd_OB-fold"/>
</dbReference>
<dbReference type="InterPro" id="IPR050437">
    <property type="entry name" value="Ribos_protein_bS1-like"/>
</dbReference>
<dbReference type="InterPro" id="IPR035104">
    <property type="entry name" value="Ribosomal_protein_S1-like"/>
</dbReference>
<dbReference type="InterPro" id="IPR003029">
    <property type="entry name" value="S1_domain"/>
</dbReference>
<dbReference type="NCBIfam" id="NF005973">
    <property type="entry name" value="PRK08059.1"/>
    <property type="match status" value="1"/>
</dbReference>
<dbReference type="NCBIfam" id="NF040579">
    <property type="entry name" value="S1_dom_CvfD"/>
    <property type="match status" value="1"/>
</dbReference>
<dbReference type="PANTHER" id="PTHR10724">
    <property type="entry name" value="30S RIBOSOMAL PROTEIN S1"/>
    <property type="match status" value="1"/>
</dbReference>
<dbReference type="PANTHER" id="PTHR10724:SF10">
    <property type="entry name" value="S1 RNA-BINDING DOMAIN-CONTAINING PROTEIN 1"/>
    <property type="match status" value="1"/>
</dbReference>
<dbReference type="Pfam" id="PF00575">
    <property type="entry name" value="S1"/>
    <property type="match status" value="1"/>
</dbReference>
<dbReference type="PRINTS" id="PR00681">
    <property type="entry name" value="RIBOSOMALS1"/>
</dbReference>
<dbReference type="SMART" id="SM00316">
    <property type="entry name" value="S1"/>
    <property type="match status" value="1"/>
</dbReference>
<dbReference type="SUPFAM" id="SSF50249">
    <property type="entry name" value="Nucleic acid-binding proteins"/>
    <property type="match status" value="1"/>
</dbReference>
<dbReference type="PROSITE" id="PS50126">
    <property type="entry name" value="S1"/>
    <property type="match status" value="1"/>
</dbReference>
<protein>
    <recommendedName>
        <fullName>General stress protein 13</fullName>
        <shortName>GSP13</shortName>
    </recommendedName>
</protein>
<accession>P80870</accession>
<accession>O05238</accession>
<reference key="1">
    <citation type="journal article" date="1997" name="Microbiology">
        <title>Analysis of the Bacillus subtilis genome: cloning and nucleotide sequence of a 62 kb region between 275 degrees (rrnB) and 284 degrees (pai).</title>
        <authorList>
            <person name="Oudega B."/>
            <person name="Koningstein G."/>
            <person name="Rodrigues L."/>
            <person name="de Sales Ramon M."/>
            <person name="Hilbert H."/>
            <person name="Duesterhoeft A."/>
            <person name="Pohl T.M."/>
            <person name="Weitzenegger T."/>
        </authorList>
    </citation>
    <scope>NUCLEOTIDE SEQUENCE [GENOMIC DNA]</scope>
    <source>
        <strain>168</strain>
    </source>
</reference>
<reference key="2">
    <citation type="journal article" date="1997" name="Nature">
        <title>The complete genome sequence of the Gram-positive bacterium Bacillus subtilis.</title>
        <authorList>
            <person name="Kunst F."/>
            <person name="Ogasawara N."/>
            <person name="Moszer I."/>
            <person name="Albertini A.M."/>
            <person name="Alloni G."/>
            <person name="Azevedo V."/>
            <person name="Bertero M.G."/>
            <person name="Bessieres P."/>
            <person name="Bolotin A."/>
            <person name="Borchert S."/>
            <person name="Borriss R."/>
            <person name="Boursier L."/>
            <person name="Brans A."/>
            <person name="Braun M."/>
            <person name="Brignell S.C."/>
            <person name="Bron S."/>
            <person name="Brouillet S."/>
            <person name="Bruschi C.V."/>
            <person name="Caldwell B."/>
            <person name="Capuano V."/>
            <person name="Carter N.M."/>
            <person name="Choi S.-K."/>
            <person name="Codani J.-J."/>
            <person name="Connerton I.F."/>
            <person name="Cummings N.J."/>
            <person name="Daniel R.A."/>
            <person name="Denizot F."/>
            <person name="Devine K.M."/>
            <person name="Duesterhoeft A."/>
            <person name="Ehrlich S.D."/>
            <person name="Emmerson P.T."/>
            <person name="Entian K.-D."/>
            <person name="Errington J."/>
            <person name="Fabret C."/>
            <person name="Ferrari E."/>
            <person name="Foulger D."/>
            <person name="Fritz C."/>
            <person name="Fujita M."/>
            <person name="Fujita Y."/>
            <person name="Fuma S."/>
            <person name="Galizzi A."/>
            <person name="Galleron N."/>
            <person name="Ghim S.-Y."/>
            <person name="Glaser P."/>
            <person name="Goffeau A."/>
            <person name="Golightly E.J."/>
            <person name="Grandi G."/>
            <person name="Guiseppi G."/>
            <person name="Guy B.J."/>
            <person name="Haga K."/>
            <person name="Haiech J."/>
            <person name="Harwood C.R."/>
            <person name="Henaut A."/>
            <person name="Hilbert H."/>
            <person name="Holsappel S."/>
            <person name="Hosono S."/>
            <person name="Hullo M.-F."/>
            <person name="Itaya M."/>
            <person name="Jones L.-M."/>
            <person name="Joris B."/>
            <person name="Karamata D."/>
            <person name="Kasahara Y."/>
            <person name="Klaerr-Blanchard M."/>
            <person name="Klein C."/>
            <person name="Kobayashi Y."/>
            <person name="Koetter P."/>
            <person name="Koningstein G."/>
            <person name="Krogh S."/>
            <person name="Kumano M."/>
            <person name="Kurita K."/>
            <person name="Lapidus A."/>
            <person name="Lardinois S."/>
            <person name="Lauber J."/>
            <person name="Lazarevic V."/>
            <person name="Lee S.-M."/>
            <person name="Levine A."/>
            <person name="Liu H."/>
            <person name="Masuda S."/>
            <person name="Mauel C."/>
            <person name="Medigue C."/>
            <person name="Medina N."/>
            <person name="Mellado R.P."/>
            <person name="Mizuno M."/>
            <person name="Moestl D."/>
            <person name="Nakai S."/>
            <person name="Noback M."/>
            <person name="Noone D."/>
            <person name="O'Reilly M."/>
            <person name="Ogawa K."/>
            <person name="Ogiwara A."/>
            <person name="Oudega B."/>
            <person name="Park S.-H."/>
            <person name="Parro V."/>
            <person name="Pohl T.M."/>
            <person name="Portetelle D."/>
            <person name="Porwollik S."/>
            <person name="Prescott A.M."/>
            <person name="Presecan E."/>
            <person name="Pujic P."/>
            <person name="Purnelle B."/>
            <person name="Rapoport G."/>
            <person name="Rey M."/>
            <person name="Reynolds S."/>
            <person name="Rieger M."/>
            <person name="Rivolta C."/>
            <person name="Rocha E."/>
            <person name="Roche B."/>
            <person name="Rose M."/>
            <person name="Sadaie Y."/>
            <person name="Sato T."/>
            <person name="Scanlan E."/>
            <person name="Schleich S."/>
            <person name="Schroeter R."/>
            <person name="Scoffone F."/>
            <person name="Sekiguchi J."/>
            <person name="Sekowska A."/>
            <person name="Seror S.J."/>
            <person name="Serror P."/>
            <person name="Shin B.-S."/>
            <person name="Soldo B."/>
            <person name="Sorokin A."/>
            <person name="Tacconi E."/>
            <person name="Takagi T."/>
            <person name="Takahashi H."/>
            <person name="Takemaru K."/>
            <person name="Takeuchi M."/>
            <person name="Tamakoshi A."/>
            <person name="Tanaka T."/>
            <person name="Terpstra P."/>
            <person name="Tognoni A."/>
            <person name="Tosato V."/>
            <person name="Uchiyama S."/>
            <person name="Vandenbol M."/>
            <person name="Vannier F."/>
            <person name="Vassarotti A."/>
            <person name="Viari A."/>
            <person name="Wambutt R."/>
            <person name="Wedler E."/>
            <person name="Wedler H."/>
            <person name="Weitzenegger T."/>
            <person name="Winters P."/>
            <person name="Wipat A."/>
            <person name="Yamamoto H."/>
            <person name="Yamane K."/>
            <person name="Yasumoto K."/>
            <person name="Yata K."/>
            <person name="Yoshida K."/>
            <person name="Yoshikawa H.-F."/>
            <person name="Zumstein E."/>
            <person name="Yoshikawa H."/>
            <person name="Danchin A."/>
        </authorList>
    </citation>
    <scope>NUCLEOTIDE SEQUENCE [LARGE SCALE GENOMIC DNA]</scope>
    <source>
        <strain>168</strain>
    </source>
</reference>
<reference key="3">
    <citation type="journal article" date="1997" name="Electrophoresis">
        <title>First steps from a two-dimensional protein index towards a response-regulation map for Bacillus subtilis.</title>
        <authorList>
            <person name="Antelmann H."/>
            <person name="Bernhardt J."/>
            <person name="Schmid R."/>
            <person name="Mach H."/>
            <person name="Voelker U."/>
            <person name="Hecker M."/>
        </authorList>
    </citation>
    <scope>PROTEIN SEQUENCE OF 2-37</scope>
    <source>
        <strain>168 / IS58</strain>
    </source>
</reference>
<reference key="4">
    <citation type="journal article" date="2007" name="Mol. Microbiol.">
        <title>A fail-safe system for the ribosome under zinc-limiting conditions in Bacillus subtilis.</title>
        <authorList>
            <person name="Natori Y."/>
            <person name="Nanamiya H."/>
            <person name="Akanuma G."/>
            <person name="Kosono S."/>
            <person name="Kudo T."/>
            <person name="Ochi K."/>
            <person name="Kawamura F."/>
        </authorList>
    </citation>
    <scope>IDENTIFICATION IN RIBOSOME COMPLEX</scope>
    <source>
        <strain>168</strain>
    </source>
</reference>
<reference key="5">
    <citation type="journal article" date="2009" name="J. Biomol. NMR">
        <title>Solution structure of GSP13 from Bacillus subtilis exhibits an S1 domain related to cold shock proteins.</title>
        <authorList>
            <person name="Yu W."/>
            <person name="Hu J."/>
            <person name="Yu B."/>
            <person name="Xia W."/>
            <person name="Jin C."/>
            <person name="Xia B."/>
        </authorList>
    </citation>
    <scope>STRUCTURE BY NMR</scope>
</reference>
<keyword id="KW-0002">3D-structure</keyword>
<keyword id="KW-0963">Cytoplasm</keyword>
<keyword id="KW-0903">Direct protein sequencing</keyword>
<keyword id="KW-1185">Reference proteome</keyword>
<keyword id="KW-0346">Stress response</keyword>
<organism>
    <name type="scientific">Bacillus subtilis (strain 168)</name>
    <dbReference type="NCBI Taxonomy" id="224308"/>
    <lineage>
        <taxon>Bacteria</taxon>
        <taxon>Bacillati</taxon>
        <taxon>Bacillota</taxon>
        <taxon>Bacilli</taxon>
        <taxon>Bacillales</taxon>
        <taxon>Bacillaceae</taxon>
        <taxon>Bacillus</taxon>
    </lineage>
</organism>
<evidence type="ECO:0000255" key="1">
    <source>
        <dbReference type="PROSITE-ProRule" id="PRU00180"/>
    </source>
</evidence>
<evidence type="ECO:0000256" key="2">
    <source>
        <dbReference type="SAM" id="MobiDB-lite"/>
    </source>
</evidence>
<evidence type="ECO:0000269" key="3">
    <source>
    </source>
</evidence>
<evidence type="ECO:0000269" key="4">
    <source>
    </source>
</evidence>
<evidence type="ECO:0000305" key="5"/>
<evidence type="ECO:0007829" key="6">
    <source>
        <dbReference type="PDB" id="2K4K"/>
    </source>
</evidence>